<reference key="1">
    <citation type="journal article" date="2007" name="J. Bacteriol.">
        <title>The complete genome sequence of the lactic acid bacterial paradigm Lactococcus lactis subsp. cremoris MG1363.</title>
        <authorList>
            <person name="Wegmann U."/>
            <person name="O'Connell-Motherway M."/>
            <person name="Zomer A."/>
            <person name="Buist G."/>
            <person name="Shearman C."/>
            <person name="Canchaya C."/>
            <person name="Ventura M."/>
            <person name="Goesmann A."/>
            <person name="Gasson M.J."/>
            <person name="Kuipers O.P."/>
            <person name="van Sinderen D."/>
            <person name="Kok J."/>
        </authorList>
    </citation>
    <scope>NUCLEOTIDE SEQUENCE [LARGE SCALE GENOMIC DNA]</scope>
    <source>
        <strain>MG1363</strain>
    </source>
</reference>
<reference key="2">
    <citation type="journal article" date="2007" name="PLoS Genet.">
        <title>The unconventional Xer recombination machinery of Streptococci/Lactococci.</title>
        <authorList>
            <person name="Le Bourgeois P."/>
            <person name="Bugarel M."/>
            <person name="Campo N."/>
            <person name="Daveran-Mingot M.-L."/>
            <person name="Labonte J."/>
            <person name="Lanfranchi D."/>
            <person name="Lautier T."/>
            <person name="Pages C."/>
            <person name="Ritzenthaler P."/>
        </authorList>
    </citation>
    <scope>FUNCTION IN XERS-MEDIATED RECOMBINATION</scope>
    <scope>SUBCELLULAR LOCATION</scope>
    <source>
        <strain>MG1363</strain>
    </source>
</reference>
<reference key="3">
    <citation type="journal article" date="2010" name="Nucleic Acids Res.">
        <title>Are two better than one? Analysis of an FtsK/Xer recombination system that uses a single recombinase.</title>
        <authorList>
            <person name="Nolivos S."/>
            <person name="Pages C."/>
            <person name="Rousseau P."/>
            <person name="Le Bourgeois P."/>
            <person name="Cornet F."/>
        </authorList>
    </citation>
    <scope>FUNCTION IN XERS-MEDIATED RECOMBINATION</scope>
    <scope>DOMAIN</scope>
</reference>
<feature type="chain" id="PRO_0000415773" description="DNA translocase FtsK">
    <location>
        <begin position="1"/>
        <end position="755"/>
    </location>
</feature>
<feature type="transmembrane region" description="Helical" evidence="2">
    <location>
        <begin position="28"/>
        <end position="48"/>
    </location>
</feature>
<feature type="transmembrane region" description="Helical" evidence="2">
    <location>
        <begin position="56"/>
        <end position="76"/>
    </location>
</feature>
<feature type="transmembrane region" description="Helical" evidence="2">
    <location>
        <begin position="88"/>
        <end position="108"/>
    </location>
</feature>
<feature type="transmembrane region" description="Helical" evidence="2">
    <location>
        <begin position="128"/>
        <end position="148"/>
    </location>
</feature>
<feature type="transmembrane region" description="Helical" evidence="2">
    <location>
        <begin position="150"/>
        <end position="170"/>
    </location>
</feature>
<feature type="topological domain" description="Cytoplasmic" evidence="2">
    <location>
        <begin position="171"/>
        <end position="755"/>
    </location>
</feature>
<feature type="domain" description="FtsK" evidence="3">
    <location>
        <begin position="408"/>
        <end position="605"/>
    </location>
</feature>
<feature type="region of interest" description="Disordered" evidence="4">
    <location>
        <begin position="660"/>
        <end position="685"/>
    </location>
</feature>
<feature type="compositionally biased region" description="Acidic residues" evidence="4">
    <location>
        <begin position="660"/>
        <end position="671"/>
    </location>
</feature>
<feature type="compositionally biased region" description="Polar residues" evidence="4">
    <location>
        <begin position="673"/>
        <end position="683"/>
    </location>
</feature>
<feature type="binding site" evidence="3">
    <location>
        <begin position="429"/>
        <end position="434"/>
    </location>
    <ligand>
        <name>ATP</name>
        <dbReference type="ChEBI" id="CHEBI:30616"/>
    </ligand>
</feature>
<gene>
    <name type="primary">ftsK</name>
    <name type="ordered locus">llmg_0766</name>
</gene>
<comment type="function">
    <text evidence="1 5 6">Essential cell division protein that coordinates cell division and chromosome segregation. The N-terminus is involved in assembly of the cell-division machinery. The C-terminus functions as a DNA motor that moves dsDNA in an ATP-dependent manner towards the difSL recombination site, which is located within the replication terminus region (By similarity). Required for activation of the XerS recombinase, allowing activation of chromosome unlinking by recombination.</text>
</comment>
<comment type="subunit">
    <text evidence="1">Homohexamer. Forms a ring that surrounds DNA (By similarity).</text>
</comment>
<comment type="subcellular location">
    <subcellularLocation>
        <location evidence="1">Cell membrane</location>
        <topology evidence="1">Multi-pass membrane protein</topology>
    </subcellularLocation>
    <text evidence="5">Located at the septum.</text>
</comment>
<comment type="domain">
    <text evidence="1 6">Consists of an N-terminal domain, which is sufficient for the localization to the septal ring and is required for cell division, followed by a linker domain, and a C-terminal domain, which forms the translocation motor involved in chromosome segregation. The C-terminal domain can be further subdivided into alpha, beta and gamma subdomains. The alpha and beta subdomains form the DNA pump, and the gamma subdomain is a regulatory subdomain (By similarity). The DNA motor and the gamma subdomain are both required to activate XerS recombinase.</text>
</comment>
<comment type="similarity">
    <text evidence="7">Belongs to the FtsK/SpoIIIE/SftA family.</text>
</comment>
<organism>
    <name type="scientific">Lactococcus lactis subsp. cremoris (strain MG1363)</name>
    <dbReference type="NCBI Taxonomy" id="416870"/>
    <lineage>
        <taxon>Bacteria</taxon>
        <taxon>Bacillati</taxon>
        <taxon>Bacillota</taxon>
        <taxon>Bacilli</taxon>
        <taxon>Lactobacillales</taxon>
        <taxon>Streptococcaceae</taxon>
        <taxon>Lactococcus</taxon>
        <taxon>Lactococcus cremoris subsp. cremoris</taxon>
    </lineage>
</organism>
<sequence length="755" mass="82962">MPAKKKTTRRNTKKELQKKAATRKMIAFFVGLLLILFALARLGIVGILLYNIVRLFIGSLAIILLLLVAAIMILSVFRKQFLKENKRIIPAIILTFIGLMFVFQIRLHQGLNETFHLIWSDLTAGRVIHFVGSGLIGAIITEPAKALFSVIGVYIIAAVLWLVAIYLMIPGLFPKMREDLHQRLAKWKEKRAEKVEAKKAVKALKKLEEEKEIPEPQTILPEAENSLFTSAPVEIPINIPEAPFEENENPVLEENPVDDEPVNFMNTNNYNGNYKLPTIDLLAEVPVKNQSGERENVRKNIGILEETFKSFGIGANVESAVVGPSITKYEIKLATGTKVSRVVNLSDDLALALAAKDIRIEAPIPGKSLVGVEIPNAEVAMVGFREMWEAGKTNPSKLLEIPLGKSLDGGIRTFDLTRMPHLLVAGSTGSGKSVAVNGIITSILMKALPSQVKFLMVDPKMVELSVYNDIPHLLIPVVTNPRKASRALQKVVDQMEERYELFSRYGVRNIAGYNEKVQRYNAESDEKMLELPLIVVIVDELADLMMVASKEVEDAIIRLGQKARAAGIHMILATQRPSVDVISGLIKANVPSRIAFAVSSGTDSRTILDTNGAEKLLGRGDMLFKPIDENHPVRLQGAFLSDDDVEAVVTFIKDQSEAQYDESFDPGEVDENQVGTGASNTGSGDPLFEEARNMVIIAQKASTAQLQRALKVGFNRASDLMNELEAQGIVGPAKGTTPRKVLVSPDGEFIGGVEE</sequence>
<accession>A2RJB8</accession>
<keyword id="KW-0067">ATP-binding</keyword>
<keyword id="KW-0131">Cell cycle</keyword>
<keyword id="KW-0132">Cell division</keyword>
<keyword id="KW-1003">Cell membrane</keyword>
<keyword id="KW-0159">Chromosome partition</keyword>
<keyword id="KW-0238">DNA-binding</keyword>
<keyword id="KW-0472">Membrane</keyword>
<keyword id="KW-0547">Nucleotide-binding</keyword>
<keyword id="KW-0812">Transmembrane</keyword>
<keyword id="KW-1133">Transmembrane helix</keyword>
<proteinExistence type="evidence at protein level"/>
<name>FTSK_LACLM</name>
<dbReference type="EMBL" id="AM406671">
    <property type="protein sequence ID" value="CAL97370.1"/>
    <property type="molecule type" value="Genomic_DNA"/>
</dbReference>
<dbReference type="RefSeq" id="WP_011834750.1">
    <property type="nucleotide sequence ID" value="NC_009004.1"/>
</dbReference>
<dbReference type="SMR" id="A2RJB8"/>
<dbReference type="STRING" id="416870.llmg_0766"/>
<dbReference type="KEGG" id="llm:llmg_0766"/>
<dbReference type="eggNOG" id="COG1674">
    <property type="taxonomic scope" value="Bacteria"/>
</dbReference>
<dbReference type="HOGENOM" id="CLU_001981_9_7_9"/>
<dbReference type="OrthoDB" id="9807790at2"/>
<dbReference type="PhylomeDB" id="A2RJB8"/>
<dbReference type="Proteomes" id="UP000000364">
    <property type="component" value="Chromosome"/>
</dbReference>
<dbReference type="GO" id="GO:0005886">
    <property type="term" value="C:plasma membrane"/>
    <property type="evidence" value="ECO:0007669"/>
    <property type="project" value="UniProtKB-SubCell"/>
</dbReference>
<dbReference type="GO" id="GO:0005524">
    <property type="term" value="F:ATP binding"/>
    <property type="evidence" value="ECO:0007669"/>
    <property type="project" value="UniProtKB-KW"/>
</dbReference>
<dbReference type="GO" id="GO:0016887">
    <property type="term" value="F:ATP hydrolysis activity"/>
    <property type="evidence" value="ECO:0007669"/>
    <property type="project" value="InterPro"/>
</dbReference>
<dbReference type="GO" id="GO:0003677">
    <property type="term" value="F:DNA binding"/>
    <property type="evidence" value="ECO:0007669"/>
    <property type="project" value="UniProtKB-KW"/>
</dbReference>
<dbReference type="GO" id="GO:0051301">
    <property type="term" value="P:cell division"/>
    <property type="evidence" value="ECO:0007669"/>
    <property type="project" value="UniProtKB-KW"/>
</dbReference>
<dbReference type="GO" id="GO:0007059">
    <property type="term" value="P:chromosome segregation"/>
    <property type="evidence" value="ECO:0007669"/>
    <property type="project" value="UniProtKB-KW"/>
</dbReference>
<dbReference type="CDD" id="cd01127">
    <property type="entry name" value="TrwB_TraG_TraD_VirD4"/>
    <property type="match status" value="1"/>
</dbReference>
<dbReference type="Gene3D" id="3.30.980.40">
    <property type="match status" value="1"/>
</dbReference>
<dbReference type="Gene3D" id="3.40.50.300">
    <property type="entry name" value="P-loop containing nucleotide triphosphate hydrolases"/>
    <property type="match status" value="1"/>
</dbReference>
<dbReference type="Gene3D" id="1.10.10.10">
    <property type="entry name" value="Winged helix-like DNA-binding domain superfamily/Winged helix DNA-binding domain"/>
    <property type="match status" value="1"/>
</dbReference>
<dbReference type="InterPro" id="IPR003593">
    <property type="entry name" value="AAA+_ATPase"/>
</dbReference>
<dbReference type="InterPro" id="IPR050206">
    <property type="entry name" value="FtsK/SpoIIIE/SftA"/>
</dbReference>
<dbReference type="InterPro" id="IPR041027">
    <property type="entry name" value="FtsK_alpha"/>
</dbReference>
<dbReference type="InterPro" id="IPR002543">
    <property type="entry name" value="FtsK_dom"/>
</dbReference>
<dbReference type="InterPro" id="IPR018541">
    <property type="entry name" value="Ftsk_gamma"/>
</dbReference>
<dbReference type="InterPro" id="IPR027417">
    <property type="entry name" value="P-loop_NTPase"/>
</dbReference>
<dbReference type="InterPro" id="IPR036388">
    <property type="entry name" value="WH-like_DNA-bd_sf"/>
</dbReference>
<dbReference type="InterPro" id="IPR036390">
    <property type="entry name" value="WH_DNA-bd_sf"/>
</dbReference>
<dbReference type="PANTHER" id="PTHR22683:SF41">
    <property type="entry name" value="DNA TRANSLOCASE FTSK"/>
    <property type="match status" value="1"/>
</dbReference>
<dbReference type="PANTHER" id="PTHR22683">
    <property type="entry name" value="SPORULATION PROTEIN RELATED"/>
    <property type="match status" value="1"/>
</dbReference>
<dbReference type="Pfam" id="PF17854">
    <property type="entry name" value="FtsK_alpha"/>
    <property type="match status" value="1"/>
</dbReference>
<dbReference type="Pfam" id="PF09397">
    <property type="entry name" value="FtsK_gamma"/>
    <property type="match status" value="1"/>
</dbReference>
<dbReference type="Pfam" id="PF01580">
    <property type="entry name" value="FtsK_SpoIIIE"/>
    <property type="match status" value="1"/>
</dbReference>
<dbReference type="SMART" id="SM00382">
    <property type="entry name" value="AAA"/>
    <property type="match status" value="1"/>
</dbReference>
<dbReference type="SMART" id="SM00843">
    <property type="entry name" value="Ftsk_gamma"/>
    <property type="match status" value="1"/>
</dbReference>
<dbReference type="SUPFAM" id="SSF52540">
    <property type="entry name" value="P-loop containing nucleoside triphosphate hydrolases"/>
    <property type="match status" value="1"/>
</dbReference>
<dbReference type="SUPFAM" id="SSF46785">
    <property type="entry name" value="Winged helix' DNA-binding domain"/>
    <property type="match status" value="1"/>
</dbReference>
<dbReference type="PROSITE" id="PS50901">
    <property type="entry name" value="FTSK"/>
    <property type="match status" value="1"/>
</dbReference>
<evidence type="ECO:0000250" key="1"/>
<evidence type="ECO:0000255" key="2"/>
<evidence type="ECO:0000255" key="3">
    <source>
        <dbReference type="PROSITE-ProRule" id="PRU00289"/>
    </source>
</evidence>
<evidence type="ECO:0000256" key="4">
    <source>
        <dbReference type="SAM" id="MobiDB-lite"/>
    </source>
</evidence>
<evidence type="ECO:0000269" key="5">
    <source>
    </source>
</evidence>
<evidence type="ECO:0000269" key="6">
    <source>
    </source>
</evidence>
<evidence type="ECO:0000305" key="7"/>
<protein>
    <recommendedName>
        <fullName>DNA translocase FtsK</fullName>
    </recommendedName>
</protein>